<name>ZNUC_HYDCU</name>
<organism>
    <name type="scientific">Hydrogenovibrio crunogenus (strain DSM 25203 / XCL-2)</name>
    <name type="common">Thiomicrospira crunogena</name>
    <dbReference type="NCBI Taxonomy" id="317025"/>
    <lineage>
        <taxon>Bacteria</taxon>
        <taxon>Pseudomonadati</taxon>
        <taxon>Pseudomonadota</taxon>
        <taxon>Gammaproteobacteria</taxon>
        <taxon>Thiotrichales</taxon>
        <taxon>Piscirickettsiaceae</taxon>
        <taxon>Hydrogenovibrio</taxon>
    </lineage>
</organism>
<sequence>MTTSPLITAKNINHAYGNKTVLNDISLTLHSNEIVTLIGPNGAGKSTLLKILLNLIQPTSGEVTRKTGLRIGFMPQKIQVDASMPLSVQRFLELGLARQSQTLFNKKTNDTTELHEVINDLKLNDLLTHPIQQVSGGEMQRILLARALLRNPELLILDEPVQGVDLQGQTELYHYISEIRDKYGCGILMVSHDLHIVMRSTNKVLCLNQHLCCSGLPQTVSGSPAFQELFGQGFEEVAFYEHHHDDRVCTHTHGHTET</sequence>
<protein>
    <recommendedName>
        <fullName evidence="1">Zinc import ATP-binding protein ZnuC</fullName>
        <ecNumber evidence="1">7.2.2.20</ecNumber>
    </recommendedName>
</protein>
<feature type="chain" id="PRO_0000281558" description="Zinc import ATP-binding protein ZnuC">
    <location>
        <begin position="1"/>
        <end position="258"/>
    </location>
</feature>
<feature type="domain" description="ABC transporter" evidence="1">
    <location>
        <begin position="7"/>
        <end position="233"/>
    </location>
</feature>
<feature type="binding site" evidence="1">
    <location>
        <begin position="39"/>
        <end position="46"/>
    </location>
    <ligand>
        <name>ATP</name>
        <dbReference type="ChEBI" id="CHEBI:30616"/>
    </ligand>
</feature>
<proteinExistence type="inferred from homology"/>
<evidence type="ECO:0000255" key="1">
    <source>
        <dbReference type="HAMAP-Rule" id="MF_01725"/>
    </source>
</evidence>
<comment type="function">
    <text evidence="1">Part of the ABC transporter complex ZnuABC involved in zinc import. Responsible for energy coupling to the transport system.</text>
</comment>
<comment type="catalytic activity">
    <reaction evidence="1">
        <text>Zn(2+)(out) + ATP(in) + H2O(in) = Zn(2+)(in) + ADP(in) + phosphate(in) + H(+)(in)</text>
        <dbReference type="Rhea" id="RHEA:29795"/>
        <dbReference type="ChEBI" id="CHEBI:15377"/>
        <dbReference type="ChEBI" id="CHEBI:15378"/>
        <dbReference type="ChEBI" id="CHEBI:29105"/>
        <dbReference type="ChEBI" id="CHEBI:30616"/>
        <dbReference type="ChEBI" id="CHEBI:43474"/>
        <dbReference type="ChEBI" id="CHEBI:456216"/>
        <dbReference type="EC" id="7.2.2.20"/>
    </reaction>
</comment>
<comment type="subunit">
    <text evidence="1">The complex is composed of two ATP-binding proteins (ZnuC), two transmembrane proteins (ZnuB) and a solute-binding protein (ZnuA).</text>
</comment>
<comment type="subcellular location">
    <subcellularLocation>
        <location evidence="1">Cell inner membrane</location>
        <topology evidence="1">Peripheral membrane protein</topology>
    </subcellularLocation>
</comment>
<comment type="similarity">
    <text evidence="1">Belongs to the ABC transporter superfamily. Zinc importer (TC 3.A.1.15.5) family.</text>
</comment>
<accession>Q31I51</accession>
<reference key="1">
    <citation type="journal article" date="2006" name="PLoS Biol.">
        <title>The genome of deep-sea vent chemolithoautotroph Thiomicrospira crunogena XCL-2.</title>
        <authorList>
            <person name="Scott K.M."/>
            <person name="Sievert S.M."/>
            <person name="Abril F.N."/>
            <person name="Ball L.A."/>
            <person name="Barrett C.J."/>
            <person name="Blake R.A."/>
            <person name="Boller A.J."/>
            <person name="Chain P.S.G."/>
            <person name="Clark J.A."/>
            <person name="Davis C.R."/>
            <person name="Detter C."/>
            <person name="Do K.F."/>
            <person name="Dobrinski K.P."/>
            <person name="Faza B.I."/>
            <person name="Fitzpatrick K.A."/>
            <person name="Freyermuth S.K."/>
            <person name="Harmer T.L."/>
            <person name="Hauser L.J."/>
            <person name="Huegler M."/>
            <person name="Kerfeld C.A."/>
            <person name="Klotz M.G."/>
            <person name="Kong W.W."/>
            <person name="Land M."/>
            <person name="Lapidus A."/>
            <person name="Larimer F.W."/>
            <person name="Longo D.L."/>
            <person name="Lucas S."/>
            <person name="Malfatti S.A."/>
            <person name="Massey S.E."/>
            <person name="Martin D.D."/>
            <person name="McCuddin Z."/>
            <person name="Meyer F."/>
            <person name="Moore J.L."/>
            <person name="Ocampo L.H. Jr."/>
            <person name="Paul J.H."/>
            <person name="Paulsen I.T."/>
            <person name="Reep D.K."/>
            <person name="Ren Q."/>
            <person name="Ross R.L."/>
            <person name="Sato P.Y."/>
            <person name="Thomas P."/>
            <person name="Tinkham L.E."/>
            <person name="Zeruth G.T."/>
        </authorList>
    </citation>
    <scope>NUCLEOTIDE SEQUENCE [LARGE SCALE GENOMIC DNA]</scope>
    <source>
        <strain>DSM 25203 / XCL-2</strain>
    </source>
</reference>
<gene>
    <name evidence="1" type="primary">znuC</name>
    <name type="ordered locus">Tcr_0576</name>
</gene>
<keyword id="KW-0067">ATP-binding</keyword>
<keyword id="KW-0997">Cell inner membrane</keyword>
<keyword id="KW-1003">Cell membrane</keyword>
<keyword id="KW-0406">Ion transport</keyword>
<keyword id="KW-0472">Membrane</keyword>
<keyword id="KW-0547">Nucleotide-binding</keyword>
<keyword id="KW-1278">Translocase</keyword>
<keyword id="KW-0813">Transport</keyword>
<keyword id="KW-0862">Zinc</keyword>
<keyword id="KW-0864">Zinc transport</keyword>
<dbReference type="EC" id="7.2.2.20" evidence="1"/>
<dbReference type="EMBL" id="CP000109">
    <property type="protein sequence ID" value="ABB41172.1"/>
    <property type="molecule type" value="Genomic_DNA"/>
</dbReference>
<dbReference type="SMR" id="Q31I51"/>
<dbReference type="STRING" id="317025.Tcr_0576"/>
<dbReference type="KEGG" id="tcx:Tcr_0576"/>
<dbReference type="eggNOG" id="COG1121">
    <property type="taxonomic scope" value="Bacteria"/>
</dbReference>
<dbReference type="HOGENOM" id="CLU_000604_1_11_6"/>
<dbReference type="OrthoDB" id="6461291at2"/>
<dbReference type="GO" id="GO:0005886">
    <property type="term" value="C:plasma membrane"/>
    <property type="evidence" value="ECO:0007669"/>
    <property type="project" value="UniProtKB-SubCell"/>
</dbReference>
<dbReference type="GO" id="GO:0015633">
    <property type="term" value="F:ABC-type zinc transporter activity"/>
    <property type="evidence" value="ECO:0007669"/>
    <property type="project" value="UniProtKB-EC"/>
</dbReference>
<dbReference type="GO" id="GO:0005524">
    <property type="term" value="F:ATP binding"/>
    <property type="evidence" value="ECO:0007669"/>
    <property type="project" value="UniProtKB-KW"/>
</dbReference>
<dbReference type="GO" id="GO:0016887">
    <property type="term" value="F:ATP hydrolysis activity"/>
    <property type="evidence" value="ECO:0007669"/>
    <property type="project" value="InterPro"/>
</dbReference>
<dbReference type="GO" id="GO:0010043">
    <property type="term" value="P:response to zinc ion"/>
    <property type="evidence" value="ECO:0007669"/>
    <property type="project" value="TreeGrafter"/>
</dbReference>
<dbReference type="FunFam" id="3.40.50.300:FF:000392">
    <property type="entry name" value="Zinc import ATP-binding protein ZnuC"/>
    <property type="match status" value="1"/>
</dbReference>
<dbReference type="Gene3D" id="3.40.50.300">
    <property type="entry name" value="P-loop containing nucleotide triphosphate hydrolases"/>
    <property type="match status" value="1"/>
</dbReference>
<dbReference type="InterPro" id="IPR003593">
    <property type="entry name" value="AAA+_ATPase"/>
</dbReference>
<dbReference type="InterPro" id="IPR003439">
    <property type="entry name" value="ABC_transporter-like_ATP-bd"/>
</dbReference>
<dbReference type="InterPro" id="IPR017871">
    <property type="entry name" value="ABC_transporter-like_CS"/>
</dbReference>
<dbReference type="InterPro" id="IPR050153">
    <property type="entry name" value="Metal_Ion_Import_ABC"/>
</dbReference>
<dbReference type="InterPro" id="IPR027417">
    <property type="entry name" value="P-loop_NTPase"/>
</dbReference>
<dbReference type="PANTHER" id="PTHR42734">
    <property type="entry name" value="METAL TRANSPORT SYSTEM ATP-BINDING PROTEIN TM_0124-RELATED"/>
    <property type="match status" value="1"/>
</dbReference>
<dbReference type="PANTHER" id="PTHR42734:SF9">
    <property type="entry name" value="ZINC IMPORT ATP-BINDING PROTEIN ZNUC"/>
    <property type="match status" value="1"/>
</dbReference>
<dbReference type="Pfam" id="PF00005">
    <property type="entry name" value="ABC_tran"/>
    <property type="match status" value="1"/>
</dbReference>
<dbReference type="SMART" id="SM00382">
    <property type="entry name" value="AAA"/>
    <property type="match status" value="1"/>
</dbReference>
<dbReference type="SUPFAM" id="SSF52540">
    <property type="entry name" value="P-loop containing nucleoside triphosphate hydrolases"/>
    <property type="match status" value="1"/>
</dbReference>
<dbReference type="PROSITE" id="PS00211">
    <property type="entry name" value="ABC_TRANSPORTER_1"/>
    <property type="match status" value="1"/>
</dbReference>
<dbReference type="PROSITE" id="PS50893">
    <property type="entry name" value="ABC_TRANSPORTER_2"/>
    <property type="match status" value="1"/>
</dbReference>
<dbReference type="PROSITE" id="PS51298">
    <property type="entry name" value="ZNUC"/>
    <property type="match status" value="1"/>
</dbReference>